<evidence type="ECO:0000250" key="1"/>
<evidence type="ECO:0000255" key="2"/>
<evidence type="ECO:0000269" key="3">
    <source>
    </source>
</evidence>
<evidence type="ECO:0000305" key="4"/>
<sequence length="286" mass="32142">MSTEITHHQAMINGYRMHYVTAGSGYPLVLLHGWPQSWYEWRNVIPALAEQFTVIAPDLRGLGDSEKPMTGFDKRTMATDVRELVSHLGYDKVGVIGHDWGGSVAFYFAYDNRDLVERLFILDMIPGLIKAGDSFPIPVALMINHIFFHGGNPDWATALISKDVNLYLRRFLTTLDYNYSPNVFSEEDIAEYVRVNSLPGSIRSGCQWYATGLREDTENLAKATDKLTIPVIAWGGSHFLGDIRPAWQEVAENVEGGAVENCGHFVPEEKPQFVIDTALKFFAPLR</sequence>
<comment type="function">
    <text>Involved in catabolic degradation of epoxides. Shows highest activity towards C6 and C7 carbocyclic epoxides. Also active towards linear 1,2-epoxyalkanes.</text>
</comment>
<comment type="catalytic activity">
    <reaction>
        <text>an epoxide + H2O = an ethanediol</text>
        <dbReference type="Rhea" id="RHEA:19037"/>
        <dbReference type="ChEBI" id="CHEBI:15377"/>
        <dbReference type="ChEBI" id="CHEBI:32955"/>
        <dbReference type="ChEBI" id="CHEBI:140594"/>
        <dbReference type="EC" id="3.3.2.10"/>
    </reaction>
</comment>
<comment type="subunit">
    <text evidence="4">Homotetramer.</text>
</comment>
<comment type="subcellular location">
    <subcellularLocation>
        <location>Cytoplasm</location>
    </subcellularLocation>
    <subcellularLocation>
        <location>Cell membrane</location>
        <topology>Peripheral membrane protein</topology>
    </subcellularLocation>
</comment>
<comment type="induction">
    <text>Expressed constitutively at a low level. Induced by cyclohexane oxide and (+/-)trans-1,2-dihydroxycyclohexane.</text>
</comment>
<comment type="similarity">
    <text evidence="4">Belongs to the AB hydrolase superfamily. Epoxide hydrolase family.</text>
</comment>
<reference key="1">
    <citation type="journal article" date="1998" name="Eur. J. Biochem.">
        <title>Characterisation of a catabolic epoxide hydrolase from a Corynebacterium sp.</title>
        <authorList>
            <person name="Misawa E."/>
            <person name="Chan Kwo Chion C.K.C."/>
            <person name="Archer I.V."/>
            <person name="Woodland M.P."/>
            <person name="Zhou N.-Y."/>
            <person name="Carter S.F."/>
            <person name="Widdowson D.A."/>
            <person name="Leak D.J."/>
        </authorList>
    </citation>
    <scope>NUCLEOTIDE SEQUENCE [GENOMIC DNA]</scope>
    <scope>PROTEIN SEQUENCE OF 2-21 AND 127-134</scope>
</reference>
<keyword id="KW-0002">3D-structure</keyword>
<keyword id="KW-0058">Aromatic hydrocarbons catabolism</keyword>
<keyword id="KW-1003">Cell membrane</keyword>
<keyword id="KW-0963">Cytoplasm</keyword>
<keyword id="KW-0903">Direct protein sequencing</keyword>
<keyword id="KW-0378">Hydrolase</keyword>
<keyword id="KW-0472">Membrane</keyword>
<dbReference type="EC" id="3.3.2.10"/>
<dbReference type="EMBL" id="AJ224332">
    <property type="protein sequence ID" value="CAA11900.1"/>
    <property type="molecule type" value="Genomic_DNA"/>
</dbReference>
<dbReference type="PDB" id="7AC0">
    <property type="method" value="X-ray"/>
    <property type="resolution" value="2.18 A"/>
    <property type="chains" value="AAA/BBB/CCC/DDD/EEE/FFF/GGG/HHH=1-286"/>
</dbReference>
<dbReference type="PDBsum" id="7AC0"/>
<dbReference type="SMR" id="O52866"/>
<dbReference type="ESTHER" id="corsp-cEH">
    <property type="family name" value="CFTR-inhibitory-factor_Cif"/>
</dbReference>
<dbReference type="GO" id="GO:0005737">
    <property type="term" value="C:cytoplasm"/>
    <property type="evidence" value="ECO:0007669"/>
    <property type="project" value="UniProtKB-SubCell"/>
</dbReference>
<dbReference type="GO" id="GO:0005886">
    <property type="term" value="C:plasma membrane"/>
    <property type="evidence" value="ECO:0007669"/>
    <property type="project" value="UniProtKB-SubCell"/>
</dbReference>
<dbReference type="GO" id="GO:0004301">
    <property type="term" value="F:epoxide hydrolase activity"/>
    <property type="evidence" value="ECO:0007669"/>
    <property type="project" value="UniProtKB-EC"/>
</dbReference>
<dbReference type="GO" id="GO:0009056">
    <property type="term" value="P:catabolic process"/>
    <property type="evidence" value="ECO:0007669"/>
    <property type="project" value="UniProtKB-KW"/>
</dbReference>
<dbReference type="Gene3D" id="3.40.50.1820">
    <property type="entry name" value="alpha/beta hydrolase"/>
    <property type="match status" value="1"/>
</dbReference>
<dbReference type="InterPro" id="IPR000073">
    <property type="entry name" value="AB_hydrolase_1"/>
</dbReference>
<dbReference type="InterPro" id="IPR029058">
    <property type="entry name" value="AB_hydrolase_fold"/>
</dbReference>
<dbReference type="InterPro" id="IPR000639">
    <property type="entry name" value="Epox_hydrolase-like"/>
</dbReference>
<dbReference type="InterPro" id="IPR016292">
    <property type="entry name" value="Epoxide_hydrolase"/>
</dbReference>
<dbReference type="PANTHER" id="PTHR43329">
    <property type="entry name" value="EPOXIDE HYDROLASE"/>
    <property type="match status" value="1"/>
</dbReference>
<dbReference type="Pfam" id="PF00561">
    <property type="entry name" value="Abhydrolase_1"/>
    <property type="match status" value="1"/>
</dbReference>
<dbReference type="PIRSF" id="PIRSF001112">
    <property type="entry name" value="Epoxide_hydrolase"/>
    <property type="match status" value="1"/>
</dbReference>
<dbReference type="PRINTS" id="PR00111">
    <property type="entry name" value="ABHYDROLASE"/>
</dbReference>
<dbReference type="PRINTS" id="PR00412">
    <property type="entry name" value="EPOXHYDRLASE"/>
</dbReference>
<dbReference type="SUPFAM" id="SSF53474">
    <property type="entry name" value="alpha/beta-Hydrolases"/>
    <property type="match status" value="1"/>
</dbReference>
<accession>O52866</accession>
<proteinExistence type="evidence at protein level"/>
<protein>
    <recommendedName>
        <fullName>Soluble epoxide hydrolase</fullName>
        <shortName>SEH</shortName>
        <ecNumber>3.3.2.10</ecNumber>
    </recommendedName>
    <alternativeName>
        <fullName>Cytosolic epoxide hydrolase</fullName>
        <shortName>cEH</shortName>
    </alternativeName>
    <alternativeName>
        <fullName>Epoxide hydratase</fullName>
    </alternativeName>
</protein>
<name>HYES_CORS2</name>
<feature type="initiator methionine" description="Removed" evidence="3">
    <location>
        <position position="1"/>
    </location>
</feature>
<feature type="chain" id="PRO_0000084110" description="Soluble epoxide hydrolase">
    <location>
        <begin position="2"/>
        <end position="286"/>
    </location>
</feature>
<feature type="domain" description="AB hydrolase-1" evidence="2">
    <location>
        <begin position="26"/>
        <end position="123"/>
    </location>
</feature>
<feature type="active site" description="Nucleophile" evidence="1">
    <location>
        <position position="99"/>
    </location>
</feature>
<feature type="active site" description="Proton donor" evidence="1">
    <location>
        <position position="209"/>
    </location>
</feature>
<feature type="active site" description="Proton acceptor" evidence="1">
    <location>
        <position position="264"/>
    </location>
</feature>
<organism>
    <name type="scientific">Corynebacterium sp. (strain C12)</name>
    <dbReference type="NCBI Taxonomy" id="268954"/>
    <lineage>
        <taxon>Bacteria</taxon>
        <taxon>Bacillati</taxon>
        <taxon>Actinomycetota</taxon>
        <taxon>Actinomycetes</taxon>
        <taxon>Mycobacteriales</taxon>
        <taxon>Corynebacteriaceae</taxon>
        <taxon>Corynebacterium</taxon>
    </lineage>
</organism>